<sequence>MRKRGLQVHARVRPVLNIGIVVGVLLGGVVLLQPFYLIQEGQVALITQFGEIIKTNNTAGLYVRAPFLHHVHKYTAKLLRVDGDPQKIPTKEKQFIEVDTTSRWRIEDVKKFYQSLGTYEAAYSRISDIIDSSVRDIITVNGLDDVVRSTNAINESNHSEQFDVPVSQLAFDRGAEKTAHMTIEKGRESLAREISQAANDQLKDFGIVVVDVIFKGIKYSDELQASVFNRMVKERNQIAQMFRSTGEGKKAEWLGKLDNEKRSLLSKAYEEAERIKGEADARAAAVYAQSYGKSPEFYGFWKSLEVYKKSLPDTEKILSTDLEYFKHLYQH</sequence>
<reference key="1">
    <citation type="journal article" date="1998" name="Science">
        <title>Complete genome sequence of Treponema pallidum, the syphilis spirochete.</title>
        <authorList>
            <person name="Fraser C.M."/>
            <person name="Norris S.J."/>
            <person name="Weinstock G.M."/>
            <person name="White O."/>
            <person name="Sutton G.G."/>
            <person name="Dodson R.J."/>
            <person name="Gwinn M.L."/>
            <person name="Hickey E.K."/>
            <person name="Clayton R.A."/>
            <person name="Ketchum K.A."/>
            <person name="Sodergren E."/>
            <person name="Hardham J.M."/>
            <person name="McLeod M.P."/>
            <person name="Salzberg S.L."/>
            <person name="Peterson J.D."/>
            <person name="Khalak H.G."/>
            <person name="Richardson D.L."/>
            <person name="Howell J.K."/>
            <person name="Chidambaram M."/>
            <person name="Utterback T.R."/>
            <person name="McDonald L.A."/>
            <person name="Artiach P."/>
            <person name="Bowman C."/>
            <person name="Cotton M.D."/>
            <person name="Fujii C."/>
            <person name="Garland S.A."/>
            <person name="Hatch B."/>
            <person name="Horst K."/>
            <person name="Roberts K.M."/>
            <person name="Sandusky M."/>
            <person name="Weidman J.F."/>
            <person name="Smith H.O."/>
            <person name="Venter J.C."/>
        </authorList>
    </citation>
    <scope>NUCLEOTIDE SEQUENCE [LARGE SCALE GENOMIC DNA]</scope>
    <source>
        <strain>Nichols</strain>
    </source>
</reference>
<name>HFLC_TREPA</name>
<organism>
    <name type="scientific">Treponema pallidum (strain Nichols)</name>
    <dbReference type="NCBI Taxonomy" id="243276"/>
    <lineage>
        <taxon>Bacteria</taxon>
        <taxon>Pseudomonadati</taxon>
        <taxon>Spirochaetota</taxon>
        <taxon>Spirochaetia</taxon>
        <taxon>Spirochaetales</taxon>
        <taxon>Treponemataceae</taxon>
        <taxon>Treponema</taxon>
    </lineage>
</organism>
<protein>
    <recommendedName>
        <fullName>Protein HflC</fullName>
    </recommendedName>
</protein>
<gene>
    <name type="primary">hflC</name>
    <name type="ordered locus">TP_0114</name>
</gene>
<proteinExistence type="inferred from homology"/>
<accession>O83152</accession>
<evidence type="ECO:0000250" key="1"/>
<evidence type="ECO:0000255" key="2"/>
<evidence type="ECO:0000305" key="3"/>
<dbReference type="EMBL" id="AE000520">
    <property type="protein sequence ID" value="AAC65104.1"/>
    <property type="molecule type" value="Genomic_DNA"/>
</dbReference>
<dbReference type="PIR" id="A71365">
    <property type="entry name" value="A71365"/>
</dbReference>
<dbReference type="RefSeq" id="WP_010881563.1">
    <property type="nucleotide sequence ID" value="NC_021490.2"/>
</dbReference>
<dbReference type="SMR" id="O83152"/>
<dbReference type="IntAct" id="O83152">
    <property type="interactions" value="1"/>
</dbReference>
<dbReference type="STRING" id="243276.TP_0114"/>
<dbReference type="MEROPS" id="I87.001"/>
<dbReference type="EnsemblBacteria" id="AAC65104">
    <property type="protein sequence ID" value="AAC65104"/>
    <property type="gene ID" value="TP_0114"/>
</dbReference>
<dbReference type="GeneID" id="93875911"/>
<dbReference type="KEGG" id="tpa:TP_0114"/>
<dbReference type="KEGG" id="tpw:TPANIC_0114"/>
<dbReference type="eggNOG" id="COG0330">
    <property type="taxonomic scope" value="Bacteria"/>
</dbReference>
<dbReference type="HOGENOM" id="CLU_059167_3_0_12"/>
<dbReference type="OrthoDB" id="9809197at2"/>
<dbReference type="Proteomes" id="UP000000811">
    <property type="component" value="Chromosome"/>
</dbReference>
<dbReference type="GO" id="GO:0016020">
    <property type="term" value="C:membrane"/>
    <property type="evidence" value="ECO:0007669"/>
    <property type="project" value="UniProtKB-SubCell"/>
</dbReference>
<dbReference type="CDD" id="cd03405">
    <property type="entry name" value="SPFH_HflC"/>
    <property type="match status" value="1"/>
</dbReference>
<dbReference type="Gene3D" id="3.30.479.30">
    <property type="entry name" value="Band 7 domain"/>
    <property type="match status" value="1"/>
</dbReference>
<dbReference type="InterPro" id="IPR001107">
    <property type="entry name" value="Band_7"/>
</dbReference>
<dbReference type="InterPro" id="IPR036013">
    <property type="entry name" value="Band_7/SPFH_dom_sf"/>
</dbReference>
<dbReference type="InterPro" id="IPR010200">
    <property type="entry name" value="HflC"/>
</dbReference>
<dbReference type="NCBIfam" id="TIGR01932">
    <property type="entry name" value="hflC"/>
    <property type="match status" value="1"/>
</dbReference>
<dbReference type="PANTHER" id="PTHR42911">
    <property type="entry name" value="MODULATOR OF FTSH PROTEASE HFLC"/>
    <property type="match status" value="1"/>
</dbReference>
<dbReference type="PANTHER" id="PTHR42911:SF1">
    <property type="entry name" value="MODULATOR OF FTSH PROTEASE HFLC"/>
    <property type="match status" value="1"/>
</dbReference>
<dbReference type="Pfam" id="PF01145">
    <property type="entry name" value="Band_7"/>
    <property type="match status" value="1"/>
</dbReference>
<dbReference type="PIRSF" id="PIRSF005651">
    <property type="entry name" value="HflC"/>
    <property type="match status" value="1"/>
</dbReference>
<dbReference type="SMART" id="SM00244">
    <property type="entry name" value="PHB"/>
    <property type="match status" value="1"/>
</dbReference>
<dbReference type="SUPFAM" id="SSF117892">
    <property type="entry name" value="Band 7/SPFH domain"/>
    <property type="match status" value="1"/>
</dbReference>
<feature type="chain" id="PRO_0000094078" description="Protein HflC">
    <location>
        <begin position="1"/>
        <end position="331"/>
    </location>
</feature>
<feature type="transmembrane region" description="Helical" evidence="2">
    <location>
        <begin position="18"/>
        <end position="38"/>
    </location>
</feature>
<keyword id="KW-0472">Membrane</keyword>
<keyword id="KW-1185">Reference proteome</keyword>
<keyword id="KW-0812">Transmembrane</keyword>
<keyword id="KW-1133">Transmembrane helix</keyword>
<comment type="function">
    <text evidence="1">HflC and HflK could regulate a protease.</text>
</comment>
<comment type="subunit">
    <text evidence="1">HflC and HflK may interact to form a multimeric complex.</text>
</comment>
<comment type="subcellular location">
    <subcellularLocation>
        <location evidence="3">Membrane</location>
        <topology evidence="3">Single-pass membrane protein</topology>
    </subcellularLocation>
</comment>
<comment type="similarity">
    <text evidence="3">Belongs to the band 7/mec-2 family. HflC subfamily.</text>
</comment>